<feature type="transit peptide" description="Mitochondrion" evidence="1">
    <location>
        <begin position="1"/>
        <end position="35"/>
    </location>
</feature>
<feature type="chain" id="PRO_0000356082" description="Putative pentatricopeptide repeat-containing protein At3g11460, mitochondrial">
    <location>
        <begin position="36"/>
        <end position="623"/>
    </location>
</feature>
<feature type="repeat" description="PPR 1">
    <location>
        <begin position="17"/>
        <end position="51"/>
    </location>
</feature>
<feature type="repeat" description="PPR 2">
    <location>
        <begin position="52"/>
        <end position="86"/>
    </location>
</feature>
<feature type="repeat" description="PPR 3">
    <location>
        <begin position="87"/>
        <end position="117"/>
    </location>
</feature>
<feature type="repeat" description="PPR 4">
    <location>
        <begin position="120"/>
        <end position="154"/>
    </location>
</feature>
<feature type="repeat" description="PPR 5">
    <location>
        <begin position="155"/>
        <end position="189"/>
    </location>
</feature>
<feature type="repeat" description="PPR 6">
    <location>
        <begin position="190"/>
        <end position="220"/>
    </location>
</feature>
<feature type="repeat" description="PPR 7">
    <location>
        <begin position="221"/>
        <end position="255"/>
    </location>
</feature>
<feature type="repeat" description="PPR 8">
    <location>
        <begin position="256"/>
        <end position="290"/>
    </location>
</feature>
<feature type="repeat" description="PPR 9">
    <location>
        <begin position="291"/>
        <end position="321"/>
    </location>
</feature>
<feature type="repeat" description="PPR 10">
    <location>
        <begin position="322"/>
        <end position="356"/>
    </location>
</feature>
<feature type="repeat" description="PPR 11">
    <location>
        <begin position="357"/>
        <end position="387"/>
    </location>
</feature>
<feature type="repeat" description="PPR 12">
    <location>
        <begin position="393"/>
        <end position="423"/>
    </location>
</feature>
<feature type="region of interest" description="Type E motif">
    <location>
        <begin position="428"/>
        <end position="503"/>
    </location>
</feature>
<feature type="region of interest" description="Type E(+) motif">
    <location>
        <begin position="504"/>
        <end position="535"/>
    </location>
</feature>
<feature type="region of interest" description="Type DYW motif">
    <location>
        <begin position="536"/>
        <end position="623"/>
    </location>
</feature>
<sequence length="623" mass="69127">MIVVTSFVRNSAVAAVASTPWNVRLRELAYQSLFSESISLYRSMLRSGSSPDAFSFPFILKSCASLSLPVSGQQLHCHVTKGGCETEPFVLTALISMYCKCGLVADARKVFEENPQSSQLSVCYNALISGYTANSKVTDAAYMFRRMKETGVSVDSVTMLGLVPLCTVPEYLWLGRSLHGQCVKGGLDSEVAVLNSFITMYMKCGSVEAGRRLFDEMPVKGLITWNAVISGYSQNGLAYDVLELYEQMKSSGVCPDPFTLVSVLSSCAHLGAKKIGHEVGKLVESNGFVPNVFVSNASISMYARCGNLAKARAVFDIMPVKSLVSWTAMIGCYGMHGMGEIGLMLFDDMIKRGIRPDGAVFVMVLSACSHSGLTDKGLELFRAMKREYKLEPGPEHYSCLVDLLGRAGRLDEAMEFIESMPVEPDGAVWGALLGACKIHKNVDMAELAFAKVIEFEPNNIGYYVLMSNIYSDSKNQEGIWRIRVMMRERAFRKKPGYSYVEHKGRVHLFLAGDRSHEQTEEVHRMLDELETSVMELAGNMDCDRGEEVSSTTREHSERLAIAFGILNSIPGTEILVIKNLRVCEDCHVFLKQVSKIVDRQFVVRDASRFHYFKDGVCSCKDYW</sequence>
<proteinExistence type="evidence at protein level"/>
<organism>
    <name type="scientific">Arabidopsis thaliana</name>
    <name type="common">Mouse-ear cress</name>
    <dbReference type="NCBI Taxonomy" id="3702"/>
    <lineage>
        <taxon>Eukaryota</taxon>
        <taxon>Viridiplantae</taxon>
        <taxon>Streptophyta</taxon>
        <taxon>Embryophyta</taxon>
        <taxon>Tracheophyta</taxon>
        <taxon>Spermatophyta</taxon>
        <taxon>Magnoliopsida</taxon>
        <taxon>eudicotyledons</taxon>
        <taxon>Gunneridae</taxon>
        <taxon>Pentapetalae</taxon>
        <taxon>rosids</taxon>
        <taxon>malvids</taxon>
        <taxon>Brassicales</taxon>
        <taxon>Brassicaceae</taxon>
        <taxon>Camelineae</taxon>
        <taxon>Arabidopsis</taxon>
    </lineage>
</organism>
<keyword id="KW-0496">Mitochondrion</keyword>
<keyword id="KW-0507">mRNA processing</keyword>
<keyword id="KW-1185">Reference proteome</keyword>
<keyword id="KW-0677">Repeat</keyword>
<keyword id="KW-0809">Transit peptide</keyword>
<name>PP223_ARATH</name>
<protein>
    <recommendedName>
        <fullName>Putative pentatricopeptide repeat-containing protein At3g11460, mitochondrial</fullName>
    </recommendedName>
    <alternativeName>
        <fullName evidence="4">Mitochondrial RNA editing factor 10</fullName>
    </alternativeName>
</protein>
<comment type="function">
    <text evidence="3">Involved in C-to-U editing of mitochondrial RNA. Required specifically for editing the mitochondrial NAD2 transcript.</text>
</comment>
<comment type="subunit">
    <text evidence="3">Interacts with MORF8/RIP1.</text>
</comment>
<comment type="subcellular location">
    <subcellularLocation>
        <location evidence="2">Mitochondrion</location>
    </subcellularLocation>
</comment>
<comment type="similarity">
    <text evidence="5">Belongs to the PPR family. PCMP-H subfamily.</text>
</comment>
<comment type="online information" name="Pentatricopeptide repeat proteins">
    <link uri="https://ppr.plantenergy.uwa.edu.au"/>
</comment>
<gene>
    <name type="primary">PCMP-H52</name>
    <name evidence="4" type="synonym">MEF10</name>
    <name type="ordered locus">At3g11460</name>
    <name type="ORF">F24K9.13</name>
</gene>
<reference key="1">
    <citation type="journal article" date="2000" name="Nature">
        <title>Sequence and analysis of chromosome 3 of the plant Arabidopsis thaliana.</title>
        <authorList>
            <person name="Salanoubat M."/>
            <person name="Lemcke K."/>
            <person name="Rieger M."/>
            <person name="Ansorge W."/>
            <person name="Unseld M."/>
            <person name="Fartmann B."/>
            <person name="Valle G."/>
            <person name="Bloecker H."/>
            <person name="Perez-Alonso M."/>
            <person name="Obermaier B."/>
            <person name="Delseny M."/>
            <person name="Boutry M."/>
            <person name="Grivell L.A."/>
            <person name="Mache R."/>
            <person name="Puigdomenech P."/>
            <person name="De Simone V."/>
            <person name="Choisne N."/>
            <person name="Artiguenave F."/>
            <person name="Robert C."/>
            <person name="Brottier P."/>
            <person name="Wincker P."/>
            <person name="Cattolico L."/>
            <person name="Weissenbach J."/>
            <person name="Saurin W."/>
            <person name="Quetier F."/>
            <person name="Schaefer M."/>
            <person name="Mueller-Auer S."/>
            <person name="Gabel C."/>
            <person name="Fuchs M."/>
            <person name="Benes V."/>
            <person name="Wurmbach E."/>
            <person name="Drzonek H."/>
            <person name="Erfle H."/>
            <person name="Jordan N."/>
            <person name="Bangert S."/>
            <person name="Wiedelmann R."/>
            <person name="Kranz H."/>
            <person name="Voss H."/>
            <person name="Holland R."/>
            <person name="Brandt P."/>
            <person name="Nyakatura G."/>
            <person name="Vezzi A."/>
            <person name="D'Angelo M."/>
            <person name="Pallavicini A."/>
            <person name="Toppo S."/>
            <person name="Simionati B."/>
            <person name="Conrad A."/>
            <person name="Hornischer K."/>
            <person name="Kauer G."/>
            <person name="Loehnert T.-H."/>
            <person name="Nordsiek G."/>
            <person name="Reichelt J."/>
            <person name="Scharfe M."/>
            <person name="Schoen O."/>
            <person name="Bargues M."/>
            <person name="Terol J."/>
            <person name="Climent J."/>
            <person name="Navarro P."/>
            <person name="Collado C."/>
            <person name="Perez-Perez A."/>
            <person name="Ottenwaelder B."/>
            <person name="Duchemin D."/>
            <person name="Cooke R."/>
            <person name="Laudie M."/>
            <person name="Berger-Llauro C."/>
            <person name="Purnelle B."/>
            <person name="Masuy D."/>
            <person name="de Haan M."/>
            <person name="Maarse A.C."/>
            <person name="Alcaraz J.-P."/>
            <person name="Cottet A."/>
            <person name="Casacuberta E."/>
            <person name="Monfort A."/>
            <person name="Argiriou A."/>
            <person name="Flores M."/>
            <person name="Liguori R."/>
            <person name="Vitale D."/>
            <person name="Mannhaupt G."/>
            <person name="Haase D."/>
            <person name="Schoof H."/>
            <person name="Rudd S."/>
            <person name="Zaccaria P."/>
            <person name="Mewes H.-W."/>
            <person name="Mayer K.F.X."/>
            <person name="Kaul S."/>
            <person name="Town C.D."/>
            <person name="Koo H.L."/>
            <person name="Tallon L.J."/>
            <person name="Jenkins J."/>
            <person name="Rooney T."/>
            <person name="Rizzo M."/>
            <person name="Walts A."/>
            <person name="Utterback T."/>
            <person name="Fujii C.Y."/>
            <person name="Shea T.P."/>
            <person name="Creasy T.H."/>
            <person name="Haas B."/>
            <person name="Maiti R."/>
            <person name="Wu D."/>
            <person name="Peterson J."/>
            <person name="Van Aken S."/>
            <person name="Pai G."/>
            <person name="Militscher J."/>
            <person name="Sellers P."/>
            <person name="Gill J.E."/>
            <person name="Feldblyum T.V."/>
            <person name="Preuss D."/>
            <person name="Lin X."/>
            <person name="Nierman W.C."/>
            <person name="Salzberg S.L."/>
            <person name="White O."/>
            <person name="Venter J.C."/>
            <person name="Fraser C.M."/>
            <person name="Kaneko T."/>
            <person name="Nakamura Y."/>
            <person name="Sato S."/>
            <person name="Kato T."/>
            <person name="Asamizu E."/>
            <person name="Sasamoto S."/>
            <person name="Kimura T."/>
            <person name="Idesawa K."/>
            <person name="Kawashima K."/>
            <person name="Kishida Y."/>
            <person name="Kiyokawa C."/>
            <person name="Kohara M."/>
            <person name="Matsumoto M."/>
            <person name="Matsuno A."/>
            <person name="Muraki A."/>
            <person name="Nakayama S."/>
            <person name="Nakazaki N."/>
            <person name="Shinpo S."/>
            <person name="Takeuchi C."/>
            <person name="Wada T."/>
            <person name="Watanabe A."/>
            <person name="Yamada M."/>
            <person name="Yasuda M."/>
            <person name="Tabata S."/>
        </authorList>
    </citation>
    <scope>NUCLEOTIDE SEQUENCE [LARGE SCALE GENOMIC DNA]</scope>
    <source>
        <strain>cv. Columbia</strain>
    </source>
</reference>
<reference key="2">
    <citation type="journal article" date="2017" name="Plant J.">
        <title>Araport11: a complete reannotation of the Arabidopsis thaliana reference genome.</title>
        <authorList>
            <person name="Cheng C.Y."/>
            <person name="Krishnakumar V."/>
            <person name="Chan A.P."/>
            <person name="Thibaud-Nissen F."/>
            <person name="Schobel S."/>
            <person name="Town C.D."/>
        </authorList>
    </citation>
    <scope>GENOME REANNOTATION</scope>
    <source>
        <strain>cv. Columbia</strain>
    </source>
</reference>
<reference key="3">
    <citation type="journal article" date="2004" name="Plant Cell">
        <title>Genome-wide analysis of Arabidopsis pentatricopeptide repeat proteins reveals their essential role in organelle biogenesis.</title>
        <authorList>
            <person name="Lurin C."/>
            <person name="Andres C."/>
            <person name="Aubourg S."/>
            <person name="Bellaoui M."/>
            <person name="Bitton F."/>
            <person name="Bruyere C."/>
            <person name="Caboche M."/>
            <person name="Debast C."/>
            <person name="Gualberto J."/>
            <person name="Hoffmann B."/>
            <person name="Lecharny A."/>
            <person name="Le Ret M."/>
            <person name="Martin-Magniette M.-L."/>
            <person name="Mireau H."/>
            <person name="Peeters N."/>
            <person name="Renou J.-P."/>
            <person name="Szurek B."/>
            <person name="Taconnat L."/>
            <person name="Small I."/>
        </authorList>
    </citation>
    <scope>GENE FAMILY</scope>
    <scope>SUBCELLULAR LOCATION</scope>
</reference>
<reference key="4">
    <citation type="journal article" date="2013" name="Plant Mol. Biol.">
        <title>MEF10 is required for RNA editing at nad2-842 in mitochondria of Arabidopsis thaliana and interacts with MORF8.</title>
        <authorList>
            <person name="Haertel B."/>
            <person name="Zehrmann A."/>
            <person name="Verbitskiy D."/>
            <person name="van der Merwe J.A."/>
            <person name="Brennicke A."/>
            <person name="Takenaka M."/>
        </authorList>
    </citation>
    <scope>FUNCTION</scope>
    <scope>INTERACTION WITH MORF8/RIP1</scope>
</reference>
<accession>Q9CAY1</accession>
<evidence type="ECO:0000255" key="1"/>
<evidence type="ECO:0000269" key="2">
    <source>
    </source>
</evidence>
<evidence type="ECO:0000269" key="3">
    <source>
    </source>
</evidence>
<evidence type="ECO:0000303" key="4">
    <source>
    </source>
</evidence>
<evidence type="ECO:0000305" key="5"/>
<dbReference type="EMBL" id="AC008153">
    <property type="protein sequence ID" value="AAG51440.1"/>
    <property type="molecule type" value="Genomic_DNA"/>
</dbReference>
<dbReference type="EMBL" id="CP002686">
    <property type="protein sequence ID" value="AEE75049.1"/>
    <property type="molecule type" value="Genomic_DNA"/>
</dbReference>
<dbReference type="RefSeq" id="NP_187753.1">
    <property type="nucleotide sequence ID" value="NM_111979.1"/>
</dbReference>
<dbReference type="SMR" id="Q9CAY1"/>
<dbReference type="BioGRID" id="5653">
    <property type="interactions" value="1"/>
</dbReference>
<dbReference type="FunCoup" id="Q9CAY1">
    <property type="interactions" value="9"/>
</dbReference>
<dbReference type="STRING" id="3702.Q9CAY1"/>
<dbReference type="PaxDb" id="3702-AT3G11460.1"/>
<dbReference type="ProteomicsDB" id="248946"/>
<dbReference type="EnsemblPlants" id="AT3G11460.1">
    <property type="protein sequence ID" value="AT3G11460.1"/>
    <property type="gene ID" value="AT3G11460"/>
</dbReference>
<dbReference type="GeneID" id="820319"/>
<dbReference type="Gramene" id="AT3G11460.1">
    <property type="protein sequence ID" value="AT3G11460.1"/>
    <property type="gene ID" value="AT3G11460"/>
</dbReference>
<dbReference type="KEGG" id="ath:AT3G11460"/>
<dbReference type="Araport" id="AT3G11460"/>
<dbReference type="TAIR" id="AT3G11460">
    <property type="gene designation" value="MEF10"/>
</dbReference>
<dbReference type="eggNOG" id="KOG4197">
    <property type="taxonomic scope" value="Eukaryota"/>
</dbReference>
<dbReference type="HOGENOM" id="CLU_002706_37_8_1"/>
<dbReference type="InParanoid" id="Q9CAY1"/>
<dbReference type="OMA" id="CLNVKCG"/>
<dbReference type="PhylomeDB" id="Q9CAY1"/>
<dbReference type="PRO" id="PR:Q9CAY1"/>
<dbReference type="Proteomes" id="UP000006548">
    <property type="component" value="Chromosome 3"/>
</dbReference>
<dbReference type="ExpressionAtlas" id="Q9CAY1">
    <property type="expression patterns" value="baseline and differential"/>
</dbReference>
<dbReference type="GO" id="GO:0005739">
    <property type="term" value="C:mitochondrion"/>
    <property type="evidence" value="ECO:0000314"/>
    <property type="project" value="UniProtKB"/>
</dbReference>
<dbReference type="GO" id="GO:0003723">
    <property type="term" value="F:RNA binding"/>
    <property type="evidence" value="ECO:0007669"/>
    <property type="project" value="InterPro"/>
</dbReference>
<dbReference type="GO" id="GO:0008270">
    <property type="term" value="F:zinc ion binding"/>
    <property type="evidence" value="ECO:0007669"/>
    <property type="project" value="InterPro"/>
</dbReference>
<dbReference type="GO" id="GO:0016554">
    <property type="term" value="P:cytidine to uridine editing"/>
    <property type="evidence" value="ECO:0000315"/>
    <property type="project" value="TAIR"/>
</dbReference>
<dbReference type="GO" id="GO:0006397">
    <property type="term" value="P:mRNA processing"/>
    <property type="evidence" value="ECO:0007669"/>
    <property type="project" value="UniProtKB-KW"/>
</dbReference>
<dbReference type="FunFam" id="1.25.40.10:FF:000682">
    <property type="entry name" value="Pentatricopeptide repeat-containing protein At3g16610"/>
    <property type="match status" value="1"/>
</dbReference>
<dbReference type="FunFam" id="1.25.40.10:FF:000090">
    <property type="entry name" value="Pentatricopeptide repeat-containing protein, chloroplastic"/>
    <property type="match status" value="1"/>
</dbReference>
<dbReference type="FunFam" id="1.25.40.10:FF:000450">
    <property type="entry name" value="Putative pentatricopeptide repeat-containing protein"/>
    <property type="match status" value="1"/>
</dbReference>
<dbReference type="Gene3D" id="1.25.40.10">
    <property type="entry name" value="Tetratricopeptide repeat domain"/>
    <property type="match status" value="3"/>
</dbReference>
<dbReference type="InterPro" id="IPR032867">
    <property type="entry name" value="DYW_dom"/>
</dbReference>
<dbReference type="InterPro" id="IPR046848">
    <property type="entry name" value="E_motif"/>
</dbReference>
<dbReference type="InterPro" id="IPR002885">
    <property type="entry name" value="Pentatricopeptide_rpt"/>
</dbReference>
<dbReference type="InterPro" id="IPR046960">
    <property type="entry name" value="PPR_At4g14850-like_plant"/>
</dbReference>
<dbReference type="InterPro" id="IPR011990">
    <property type="entry name" value="TPR-like_helical_dom_sf"/>
</dbReference>
<dbReference type="NCBIfam" id="TIGR00756">
    <property type="entry name" value="PPR"/>
    <property type="match status" value="5"/>
</dbReference>
<dbReference type="PANTHER" id="PTHR47926">
    <property type="entry name" value="PENTATRICOPEPTIDE REPEAT-CONTAINING PROTEIN"/>
    <property type="match status" value="1"/>
</dbReference>
<dbReference type="PANTHER" id="PTHR47926:SF503">
    <property type="entry name" value="PENTATRICOPEPTIDE REPEAT-CONTAINING PROTEIN"/>
    <property type="match status" value="1"/>
</dbReference>
<dbReference type="Pfam" id="PF14432">
    <property type="entry name" value="DYW_deaminase"/>
    <property type="match status" value="1"/>
</dbReference>
<dbReference type="Pfam" id="PF20431">
    <property type="entry name" value="E_motif"/>
    <property type="match status" value="1"/>
</dbReference>
<dbReference type="Pfam" id="PF01535">
    <property type="entry name" value="PPR"/>
    <property type="match status" value="3"/>
</dbReference>
<dbReference type="Pfam" id="PF13041">
    <property type="entry name" value="PPR_2"/>
    <property type="match status" value="3"/>
</dbReference>
<dbReference type="PROSITE" id="PS51375">
    <property type="entry name" value="PPR"/>
    <property type="match status" value="13"/>
</dbReference>